<accession>Q1WT38</accession>
<sequence length="786" mass="88057">MNKKVLKTLEYDKVKQNLYAFTTTSMGKRLIDKLEPSSDYDEISNSLAQTKDGADILRIKGGIPVPNLISIKSFLKRLDIGGTLNSKELAAIGRVLRATNEVNRFFKDLADNKIKLEVLFDDVAKLESLPEISKKLLVSIENDGHVTDDASTLLKSIRQQISVTEETIRERLNAYTRGTNSKYLSNAVVTIRNERYVLPVKQEYRSKFGGIVHDQSSSGQTLFVEPAVIVELNNRLRQQQVAEREEINRILEELSKELAPYTHELNNNAKILGMLDFINAKAKYAHSIKATEPILSKENDVYLRQVWHPLLDMKKAVKNDIMIGKDYQAIVITGPNTGGKTITLKTLGLVQLMGQSGLYIPAFEESRIGIFDDIFADIGDEQSIEQSLSTFSSHMTNIVEILKGIDEKSLVLFDELGAGTDPQEGAALAISILDAVGAKGSYVVATTHYPELKAYGFERPNTINASMEFDANTLQPTYRLLIGIPGRSNAFDISQRLGLDKMIVMAARQLTSQDSQDLNEMISDLVAKRHDAEEKEIMYRKYLREAEELHHDLETNFHQFERQKENMLEQAKERANQIVEETKKKSDELISELRKMKMSAASNIEEGSLIDAQGRVNALHQETNLKKNKVLRKAKQQQELHPNDDVMVNSYGQRGVLLRKAGNHAWEVQLGILKMKIDESDLEKIKVKDTQPKRAGAVLKSSSSSHVSPTLDLRGERYENAMVKVDRYIDAAVLAGYNSVTIIHGKGTGALRTGIINYLKQNKAVKNFEFASPNNGGNGATVVYFK</sequence>
<dbReference type="EC" id="3.1.-.-" evidence="1"/>
<dbReference type="EC" id="3.6.4.-" evidence="1"/>
<dbReference type="EMBL" id="CP000233">
    <property type="protein sequence ID" value="ABD99913.1"/>
    <property type="molecule type" value="Genomic_DNA"/>
</dbReference>
<dbReference type="RefSeq" id="WP_003700526.1">
    <property type="nucleotide sequence ID" value="NC_007929.1"/>
</dbReference>
<dbReference type="RefSeq" id="YP_535996.1">
    <property type="nucleotide sequence ID" value="NC_007929.1"/>
</dbReference>
<dbReference type="SMR" id="Q1WT38"/>
<dbReference type="STRING" id="362948.LSL_1105"/>
<dbReference type="KEGG" id="lsl:LSL_1105"/>
<dbReference type="PATRIC" id="fig|362948.14.peg.1177"/>
<dbReference type="HOGENOM" id="CLU_011252_2_1_9"/>
<dbReference type="OrthoDB" id="9808166at2"/>
<dbReference type="Proteomes" id="UP000006559">
    <property type="component" value="Chromosome"/>
</dbReference>
<dbReference type="GO" id="GO:0005524">
    <property type="term" value="F:ATP binding"/>
    <property type="evidence" value="ECO:0007669"/>
    <property type="project" value="UniProtKB-UniRule"/>
</dbReference>
<dbReference type="GO" id="GO:0016887">
    <property type="term" value="F:ATP hydrolysis activity"/>
    <property type="evidence" value="ECO:0007669"/>
    <property type="project" value="InterPro"/>
</dbReference>
<dbReference type="GO" id="GO:0140664">
    <property type="term" value="F:ATP-dependent DNA damage sensor activity"/>
    <property type="evidence" value="ECO:0007669"/>
    <property type="project" value="InterPro"/>
</dbReference>
<dbReference type="GO" id="GO:0004519">
    <property type="term" value="F:endonuclease activity"/>
    <property type="evidence" value="ECO:0007669"/>
    <property type="project" value="UniProtKB-UniRule"/>
</dbReference>
<dbReference type="GO" id="GO:0030983">
    <property type="term" value="F:mismatched DNA binding"/>
    <property type="evidence" value="ECO:0007669"/>
    <property type="project" value="InterPro"/>
</dbReference>
<dbReference type="GO" id="GO:0043023">
    <property type="term" value="F:ribosomal large subunit binding"/>
    <property type="evidence" value="ECO:0007669"/>
    <property type="project" value="UniProtKB-UniRule"/>
</dbReference>
<dbReference type="GO" id="GO:0019843">
    <property type="term" value="F:rRNA binding"/>
    <property type="evidence" value="ECO:0007669"/>
    <property type="project" value="UniProtKB-UniRule"/>
</dbReference>
<dbReference type="GO" id="GO:0006298">
    <property type="term" value="P:mismatch repair"/>
    <property type="evidence" value="ECO:0007669"/>
    <property type="project" value="InterPro"/>
</dbReference>
<dbReference type="GO" id="GO:0045910">
    <property type="term" value="P:negative regulation of DNA recombination"/>
    <property type="evidence" value="ECO:0007669"/>
    <property type="project" value="InterPro"/>
</dbReference>
<dbReference type="GO" id="GO:0072344">
    <property type="term" value="P:rescue of stalled ribosome"/>
    <property type="evidence" value="ECO:0007669"/>
    <property type="project" value="UniProtKB-UniRule"/>
</dbReference>
<dbReference type="CDD" id="cd03280">
    <property type="entry name" value="ABC_MutS2"/>
    <property type="match status" value="1"/>
</dbReference>
<dbReference type="FunFam" id="3.40.50.300:FF:000830">
    <property type="entry name" value="Endonuclease MutS2"/>
    <property type="match status" value="1"/>
</dbReference>
<dbReference type="Gene3D" id="1.10.1420.10">
    <property type="match status" value="2"/>
</dbReference>
<dbReference type="Gene3D" id="3.30.1370.110">
    <property type="match status" value="1"/>
</dbReference>
<dbReference type="Gene3D" id="3.40.50.300">
    <property type="entry name" value="P-loop containing nucleotide triphosphate hydrolases"/>
    <property type="match status" value="1"/>
</dbReference>
<dbReference type="HAMAP" id="MF_00092">
    <property type="entry name" value="MutS2"/>
    <property type="match status" value="1"/>
</dbReference>
<dbReference type="InterPro" id="IPR000432">
    <property type="entry name" value="DNA_mismatch_repair_MutS_C"/>
</dbReference>
<dbReference type="InterPro" id="IPR007696">
    <property type="entry name" value="DNA_mismatch_repair_MutS_core"/>
</dbReference>
<dbReference type="InterPro" id="IPR036187">
    <property type="entry name" value="DNA_mismatch_repair_MutS_sf"/>
</dbReference>
<dbReference type="InterPro" id="IPR046893">
    <property type="entry name" value="MSSS"/>
</dbReference>
<dbReference type="InterPro" id="IPR045076">
    <property type="entry name" value="MutS"/>
</dbReference>
<dbReference type="InterPro" id="IPR005747">
    <property type="entry name" value="MutS2"/>
</dbReference>
<dbReference type="InterPro" id="IPR027417">
    <property type="entry name" value="P-loop_NTPase"/>
</dbReference>
<dbReference type="InterPro" id="IPR002625">
    <property type="entry name" value="Smr_dom"/>
</dbReference>
<dbReference type="InterPro" id="IPR036063">
    <property type="entry name" value="Smr_dom_sf"/>
</dbReference>
<dbReference type="NCBIfam" id="TIGR01069">
    <property type="entry name" value="mutS2"/>
    <property type="match status" value="1"/>
</dbReference>
<dbReference type="PANTHER" id="PTHR48466:SF2">
    <property type="entry name" value="OS10G0509000 PROTEIN"/>
    <property type="match status" value="1"/>
</dbReference>
<dbReference type="PANTHER" id="PTHR48466">
    <property type="entry name" value="OS10G0509000 PROTEIN-RELATED"/>
    <property type="match status" value="1"/>
</dbReference>
<dbReference type="Pfam" id="PF20297">
    <property type="entry name" value="MSSS"/>
    <property type="match status" value="1"/>
</dbReference>
<dbReference type="Pfam" id="PF00488">
    <property type="entry name" value="MutS_V"/>
    <property type="match status" value="1"/>
</dbReference>
<dbReference type="Pfam" id="PF01713">
    <property type="entry name" value="Smr"/>
    <property type="match status" value="1"/>
</dbReference>
<dbReference type="PIRSF" id="PIRSF005814">
    <property type="entry name" value="MutS_YshD"/>
    <property type="match status" value="1"/>
</dbReference>
<dbReference type="SMART" id="SM00534">
    <property type="entry name" value="MUTSac"/>
    <property type="match status" value="1"/>
</dbReference>
<dbReference type="SMART" id="SM00533">
    <property type="entry name" value="MUTSd"/>
    <property type="match status" value="1"/>
</dbReference>
<dbReference type="SMART" id="SM00463">
    <property type="entry name" value="SMR"/>
    <property type="match status" value="1"/>
</dbReference>
<dbReference type="SUPFAM" id="SSF48334">
    <property type="entry name" value="DNA repair protein MutS, domain III"/>
    <property type="match status" value="1"/>
</dbReference>
<dbReference type="SUPFAM" id="SSF52540">
    <property type="entry name" value="P-loop containing nucleoside triphosphate hydrolases"/>
    <property type="match status" value="1"/>
</dbReference>
<dbReference type="SUPFAM" id="SSF160443">
    <property type="entry name" value="SMR domain-like"/>
    <property type="match status" value="1"/>
</dbReference>
<dbReference type="PROSITE" id="PS00486">
    <property type="entry name" value="DNA_MISMATCH_REPAIR_2"/>
    <property type="match status" value="1"/>
</dbReference>
<dbReference type="PROSITE" id="PS50828">
    <property type="entry name" value="SMR"/>
    <property type="match status" value="1"/>
</dbReference>
<protein>
    <recommendedName>
        <fullName evidence="1">Endonuclease MutS2</fullName>
        <ecNumber evidence="1">3.1.-.-</ecNumber>
    </recommendedName>
    <alternativeName>
        <fullName evidence="1">Ribosome-associated protein quality control-upstream factor</fullName>
        <shortName evidence="1">RQC-upstream factor</shortName>
        <shortName evidence="1">RqcU</shortName>
        <ecNumber evidence="1">3.6.4.-</ecNumber>
    </alternativeName>
</protein>
<reference key="1">
    <citation type="journal article" date="2006" name="Proc. Natl. Acad. Sci. U.S.A.">
        <title>Multireplicon genome architecture of Lactobacillus salivarius.</title>
        <authorList>
            <person name="Claesson M.J."/>
            <person name="Li Y."/>
            <person name="Leahy S."/>
            <person name="Canchaya C."/>
            <person name="van Pijkeren J.P."/>
            <person name="Cerdeno-Tarraga A.M."/>
            <person name="Parkhill J."/>
            <person name="Flynn S."/>
            <person name="O'Sullivan G.C."/>
            <person name="Collins J.K."/>
            <person name="Higgins D."/>
            <person name="Shanahan F."/>
            <person name="Fitzgerald G.F."/>
            <person name="van Sinderen D."/>
            <person name="O'Toole P.W."/>
        </authorList>
    </citation>
    <scope>NUCLEOTIDE SEQUENCE [LARGE SCALE GENOMIC DNA]</scope>
    <source>
        <strain>UCC118</strain>
    </source>
</reference>
<comment type="function">
    <text evidence="1">Endonuclease that is involved in the suppression of homologous recombination and thus may have a key role in the control of bacterial genetic diversity.</text>
</comment>
<comment type="function">
    <text evidence="1">Acts as a ribosome collision sensor, splitting the ribosome into its 2 subunits. Detects stalled/collided 70S ribosomes which it binds and splits by an ATP-hydrolysis driven conformational change. Acts upstream of the ribosome quality control system (RQC), a ribosome-associated complex that mediates the extraction of incompletely synthesized nascent chains from stalled ribosomes and their subsequent degradation. Probably generates substrates for RQC.</text>
</comment>
<comment type="subunit">
    <text evidence="1">Homodimer. Binds to stalled ribosomes, contacting rRNA.</text>
</comment>
<comment type="similarity">
    <text evidence="1">Belongs to the DNA mismatch repair MutS family. MutS2 subfamily.</text>
</comment>
<organism>
    <name type="scientific">Ligilactobacillus salivarius (strain UCC118)</name>
    <name type="common">Lactobacillus salivarius</name>
    <dbReference type="NCBI Taxonomy" id="362948"/>
    <lineage>
        <taxon>Bacteria</taxon>
        <taxon>Bacillati</taxon>
        <taxon>Bacillota</taxon>
        <taxon>Bacilli</taxon>
        <taxon>Lactobacillales</taxon>
        <taxon>Lactobacillaceae</taxon>
        <taxon>Ligilactobacillus</taxon>
    </lineage>
</organism>
<gene>
    <name evidence="1" type="primary">mutS2</name>
    <name evidence="1" type="synonym">rqcU</name>
    <name type="ordered locus">LSL_1105</name>
</gene>
<keyword id="KW-0067">ATP-binding</keyword>
<keyword id="KW-0238">DNA-binding</keyword>
<keyword id="KW-0255">Endonuclease</keyword>
<keyword id="KW-0378">Hydrolase</keyword>
<keyword id="KW-0540">Nuclease</keyword>
<keyword id="KW-0547">Nucleotide-binding</keyword>
<keyword id="KW-1185">Reference proteome</keyword>
<keyword id="KW-0694">RNA-binding</keyword>
<keyword id="KW-0699">rRNA-binding</keyword>
<name>MUTS2_LIGS1</name>
<feature type="chain" id="PRO_1000093371" description="Endonuclease MutS2">
    <location>
        <begin position="1"/>
        <end position="786"/>
    </location>
</feature>
<feature type="domain" description="Smr" evidence="1">
    <location>
        <begin position="711"/>
        <end position="786"/>
    </location>
</feature>
<feature type="binding site" evidence="1">
    <location>
        <begin position="334"/>
        <end position="341"/>
    </location>
    <ligand>
        <name>ATP</name>
        <dbReference type="ChEBI" id="CHEBI:30616"/>
    </ligand>
</feature>
<evidence type="ECO:0000255" key="1">
    <source>
        <dbReference type="HAMAP-Rule" id="MF_00092"/>
    </source>
</evidence>
<proteinExistence type="inferred from homology"/>